<organismHost>
    <name type="scientific">Thermus scotoductus</name>
    <dbReference type="NCBI Taxonomy" id="37636"/>
</organismHost>
<keyword id="KW-0067">ATP-binding</keyword>
<keyword id="KW-0436">Ligase</keyword>
<keyword id="KW-0460">Magnesium</keyword>
<keyword id="KW-0479">Metal-binding</keyword>
<keyword id="KW-0547">Nucleotide-binding</keyword>
<reference key="1">
    <citation type="journal article" date="2005" name="Nucleic Acids Res.">
        <title>Isolation and characterization of a thermostable RNA ligase 1 from a Thermus scotoductus bacteriophage TS2126 with good single-stranded DNA ligation properties.</title>
        <authorList>
            <person name="Blondal T."/>
            <person name="Thorisdottir A."/>
            <person name="Unnsteinsdottir U."/>
            <person name="Hjorleifsdottir S."/>
            <person name="Aevarsson A."/>
            <person name="Ernstsson S."/>
            <person name="Fridjonsson O.H."/>
            <person name="Skirnisdottir S."/>
            <person name="Wheat J.O."/>
            <person name="Hermannsdottir A.G."/>
            <person name="Sigurdsson S.T."/>
            <person name="Hreggvidsson G.O."/>
            <person name="Smith A.V."/>
            <person name="Kristjansson J.K."/>
        </authorList>
    </citation>
    <scope>NUCLEOTIDE SEQUENCE [GENOMIC DNA]</scope>
    <scope>FUNCTION</scope>
    <scope>CATALYTIC ACTIVITY</scope>
    <scope>COFACTOR</scope>
    <scope>BIOPHYSICOCHEMICAL PROPERTIES</scope>
    <scope>BIOTECHNOLOGY</scope>
</reference>
<reference key="2">
    <citation type="journal article" date="2014" name="J. Biol. Chem.">
        <title>Polynucleotide 3'-terminal phosphate modifications by RNA and DNA ligases.</title>
        <authorList>
            <person name="Zhelkovsky A.M."/>
            <person name="McReynolds L.A."/>
        </authorList>
    </citation>
    <scope>FUNCTION</scope>
</reference>
<organism>
    <name type="scientific">Bacteriophage TS2126</name>
    <dbReference type="NCBI Taxonomy" id="272473"/>
    <lineage>
        <taxon>Viruses</taxon>
    </lineage>
</organism>
<dbReference type="EC" id="6.5.1.3" evidence="3"/>
<dbReference type="SMR" id="C0HM52"/>
<dbReference type="GO" id="GO:0005524">
    <property type="term" value="F:ATP binding"/>
    <property type="evidence" value="ECO:0007669"/>
    <property type="project" value="UniProtKB-KW"/>
</dbReference>
<dbReference type="GO" id="GO:0016874">
    <property type="term" value="F:ligase activity"/>
    <property type="evidence" value="ECO:0007669"/>
    <property type="project" value="UniProtKB-KW"/>
</dbReference>
<dbReference type="GO" id="GO:0046872">
    <property type="term" value="F:metal ion binding"/>
    <property type="evidence" value="ECO:0007669"/>
    <property type="project" value="UniProtKB-KW"/>
</dbReference>
<dbReference type="InterPro" id="IPR019039">
    <property type="entry name" value="T4-Rnl1-like_N"/>
</dbReference>
<dbReference type="Pfam" id="PF09511">
    <property type="entry name" value="RNA_lig_T4_1"/>
    <property type="match status" value="1"/>
</dbReference>
<proteinExistence type="evidence at protein level"/>
<sequence length="395" mass="43871">MSSLAPWRTTSWSPLGSPPSLEDALRLARTTRAFAVRRDGEGRALVTYLYGTPELFSLPGARELRGIVYREEDGTVLSRPFHKFFNFGEPLAPGEEAFKAFRDSMVPLFVAEKVDGYLAQAYLDGGELRFASRHSLNPPLVGALLRKAVDEEAMARLGKLLAAEGGRWTALLEVVDPEAPVMVPYQEPGVYLLALRSIGEGHYLLPGVHFPLPEALRYVRWEPRMDFDPHRFRGEIRDLQGVEGYVVTDGAEFVKFKTGWAFRLARFLMDPEGVFLEAYAEDRLDDLVGALAGREDLLRAVARAQDYLAGLYGEAVGAGDALRRMGLPRKEAWARVQEEAGRWGGFAPAYARAAMAAYEGGEAREAFLVELRKRSARKALEALHLFPRVGGELRG</sequence>
<protein>
    <recommendedName>
        <fullName evidence="5">RNA ligase 1</fullName>
        <ecNumber evidence="3">6.5.1.3</ecNumber>
    </recommendedName>
    <alternativeName>
        <fullName evidence="5">TS2126 RNA ligase 1</fullName>
    </alternativeName>
</protein>
<comment type="function">
    <text evidence="3 4">RNA ligase that ligates single-stranded nucleic acids in an ATP-dependent manner (PubMed:15642699). Catalyzes both inter- and intra-molecular single-stranded DNA (ssDNA) ligation to &gt;50% completion in a matter of hours at an elevated temperature, although favoring intra-molecular ligation on RNA and single-stranded DNA substrates (PubMed:15642699). Is able to catalyze the adenylation reaction of ssDNA 3'-terminal phosphate (ssDNA 3'p) to 3'-adenylated DNA (ssDNA 3'pp5'A) (PubMed:25324547). Does not have significant 3'-adenylation activity with a 3'-phosphorylated nicked dsDNA substrate (PubMed:25324547).</text>
</comment>
<comment type="catalytic activity">
    <reaction evidence="3">
        <text>ATP + (ribonucleotide)n-3'-hydroxyl + 5'-phospho-(ribonucleotide)m = (ribonucleotide)n+m + AMP + diphosphate.</text>
        <dbReference type="EC" id="6.5.1.3"/>
    </reaction>
</comment>
<comment type="cofactor">
    <cofactor evidence="3">
        <name>Mg(2+)</name>
        <dbReference type="ChEBI" id="CHEBI:18420"/>
    </cofactor>
    <cofactor evidence="3">
        <name>Mn(2+)</name>
        <dbReference type="ChEBI" id="CHEBI:29035"/>
    </cofactor>
    <text evidence="3">Optimum activity is reached at 5-10 mM for both Mg(2+) and Mn(2+), with Mn(2+) showing slightly higher activity than Mg(2+).</text>
</comment>
<comment type="biophysicochemical properties">
    <kinetics>
        <KM evidence="3">7 uM for ATP on the RNA substrate</KM>
        <KM evidence="3">40 uM for ATP on the DNA substrate</KM>
        <text evidence="3">Optimum activity is reached at 0.025-2.5 mM ATP.</text>
    </kinetics>
    <phDependence>
        <text evidence="3">Optimum pH is between 7.5 and 8.0.</text>
    </phDependence>
    <temperatureDependence>
        <text evidence="3">Optimum temperature is between 65 and 70 degrees Celsius.</text>
    </temperatureDependence>
</comment>
<comment type="biotechnology">
    <text evidence="5">The thermostable RNA ligase could be of potential use in various applications including nucleotide labeling, oligonucleotide synthesis, gene synthesis, gene amplification and amplification of mRNA and synthesis of cDNA (PubMed:15642699). These methods of use have been described in Patent WO2004027056 (PubMed:15642699).</text>
</comment>
<gene>
    <name evidence="5" type="primary">RlnA</name>
</gene>
<accession>C0HM52</accession>
<name>RLIG_BPTS2</name>
<feature type="chain" id="PRO_0000456724" description="RNA ligase 1">
    <location>
        <begin position="1"/>
        <end position="395"/>
    </location>
</feature>
<feature type="active site" description="N6-AMP-lysine intermediate" evidence="1 2">
    <location>
        <position position="113"/>
    </location>
</feature>
<feature type="binding site" evidence="1 2">
    <location>
        <position position="48"/>
    </location>
    <ligand>
        <name>ATP</name>
        <dbReference type="ChEBI" id="CHEBI:30616"/>
    </ligand>
</feature>
<feature type="binding site" evidence="1 2">
    <location>
        <position position="65"/>
    </location>
    <ligand>
        <name>ATP</name>
        <dbReference type="ChEBI" id="CHEBI:30616"/>
    </ligand>
</feature>
<feature type="binding site" evidence="1 2">
    <location>
        <position position="83"/>
    </location>
    <ligand>
        <name>ATP</name>
        <dbReference type="ChEBI" id="CHEBI:30616"/>
    </ligand>
</feature>
<feature type="binding site" evidence="1 2">
    <location>
        <position position="173"/>
    </location>
    <ligand>
        <name>ATP</name>
        <dbReference type="ChEBI" id="CHEBI:30616"/>
    </ligand>
</feature>
<feature type="binding site" evidence="1 2">
    <location>
        <position position="255"/>
    </location>
    <ligand>
        <name>ATP</name>
        <dbReference type="ChEBI" id="CHEBI:30616"/>
    </ligand>
</feature>
<feature type="binding site" evidence="1 2">
    <location>
        <position position="257"/>
    </location>
    <ligand>
        <name>ATP</name>
        <dbReference type="ChEBI" id="CHEBI:30616"/>
    </ligand>
</feature>
<feature type="binding site" evidence="1 2">
    <location>
        <position position="285"/>
    </location>
    <ligand>
        <name>Mg(2+)</name>
        <dbReference type="ChEBI" id="CHEBI:18420"/>
        <note>catalytic</note>
    </ligand>
</feature>
<feature type="site" description="Essential for RNA ligase activity" evidence="1 2">
    <location>
        <position position="173"/>
    </location>
</feature>
<evidence type="ECO:0000250" key="1">
    <source>
        <dbReference type="UniProtKB" id="P00971"/>
    </source>
</evidence>
<evidence type="ECO:0000255" key="2">
    <source>
        <dbReference type="HAMAP-Rule" id="MF_04149"/>
    </source>
</evidence>
<evidence type="ECO:0000269" key="3">
    <source>
    </source>
</evidence>
<evidence type="ECO:0000269" key="4">
    <source>
    </source>
</evidence>
<evidence type="ECO:0000303" key="5">
    <source>
    </source>
</evidence>